<evidence type="ECO:0000255" key="1">
    <source>
        <dbReference type="HAMAP-Rule" id="MF_01367"/>
    </source>
</evidence>
<evidence type="ECO:0000305" key="2"/>
<reference key="1">
    <citation type="submission" date="2006-12" db="EMBL/GenBank/DDBJ databases">
        <title>Complete sequence of chromosome 1 of Nocardioides sp. JS614.</title>
        <authorList>
            <person name="Copeland A."/>
            <person name="Lucas S."/>
            <person name="Lapidus A."/>
            <person name="Barry K."/>
            <person name="Detter J.C."/>
            <person name="Glavina del Rio T."/>
            <person name="Hammon N."/>
            <person name="Israni S."/>
            <person name="Dalin E."/>
            <person name="Tice H."/>
            <person name="Pitluck S."/>
            <person name="Thompson L.S."/>
            <person name="Brettin T."/>
            <person name="Bruce D."/>
            <person name="Han C."/>
            <person name="Tapia R."/>
            <person name="Schmutz J."/>
            <person name="Larimer F."/>
            <person name="Land M."/>
            <person name="Hauser L."/>
            <person name="Kyrpides N."/>
            <person name="Kim E."/>
            <person name="Mattes T."/>
            <person name="Gossett J."/>
            <person name="Richardson P."/>
        </authorList>
    </citation>
    <scope>NUCLEOTIDE SEQUENCE [LARGE SCALE GENOMIC DNA]</scope>
    <source>
        <strain>ATCC BAA-499 / JS614</strain>
    </source>
</reference>
<accession>A1SNK8</accession>
<dbReference type="EMBL" id="CP000509">
    <property type="protein sequence ID" value="ABL83393.1"/>
    <property type="molecule type" value="Genomic_DNA"/>
</dbReference>
<dbReference type="RefSeq" id="WP_011757324.1">
    <property type="nucleotide sequence ID" value="NC_008699.1"/>
</dbReference>
<dbReference type="SMR" id="A1SNK8"/>
<dbReference type="STRING" id="196162.Noca_3895"/>
<dbReference type="GeneID" id="96611313"/>
<dbReference type="KEGG" id="nca:Noca_3895"/>
<dbReference type="eggNOG" id="COG0093">
    <property type="taxonomic scope" value="Bacteria"/>
</dbReference>
<dbReference type="HOGENOM" id="CLU_095071_2_1_11"/>
<dbReference type="OrthoDB" id="9806379at2"/>
<dbReference type="Proteomes" id="UP000000640">
    <property type="component" value="Chromosome"/>
</dbReference>
<dbReference type="GO" id="GO:0022625">
    <property type="term" value="C:cytosolic large ribosomal subunit"/>
    <property type="evidence" value="ECO:0007669"/>
    <property type="project" value="TreeGrafter"/>
</dbReference>
<dbReference type="GO" id="GO:0070180">
    <property type="term" value="F:large ribosomal subunit rRNA binding"/>
    <property type="evidence" value="ECO:0007669"/>
    <property type="project" value="TreeGrafter"/>
</dbReference>
<dbReference type="GO" id="GO:0003735">
    <property type="term" value="F:structural constituent of ribosome"/>
    <property type="evidence" value="ECO:0007669"/>
    <property type="project" value="InterPro"/>
</dbReference>
<dbReference type="GO" id="GO:0006412">
    <property type="term" value="P:translation"/>
    <property type="evidence" value="ECO:0007669"/>
    <property type="project" value="UniProtKB-UniRule"/>
</dbReference>
<dbReference type="CDD" id="cd00337">
    <property type="entry name" value="Ribosomal_uL14"/>
    <property type="match status" value="1"/>
</dbReference>
<dbReference type="FunFam" id="2.40.150.20:FF:000001">
    <property type="entry name" value="50S ribosomal protein L14"/>
    <property type="match status" value="1"/>
</dbReference>
<dbReference type="Gene3D" id="2.40.150.20">
    <property type="entry name" value="Ribosomal protein L14"/>
    <property type="match status" value="1"/>
</dbReference>
<dbReference type="HAMAP" id="MF_01367">
    <property type="entry name" value="Ribosomal_uL14"/>
    <property type="match status" value="1"/>
</dbReference>
<dbReference type="InterPro" id="IPR000218">
    <property type="entry name" value="Ribosomal_uL14"/>
</dbReference>
<dbReference type="InterPro" id="IPR005745">
    <property type="entry name" value="Ribosomal_uL14_bac-type"/>
</dbReference>
<dbReference type="InterPro" id="IPR019972">
    <property type="entry name" value="Ribosomal_uL14_CS"/>
</dbReference>
<dbReference type="InterPro" id="IPR036853">
    <property type="entry name" value="Ribosomal_uL14_sf"/>
</dbReference>
<dbReference type="NCBIfam" id="TIGR01067">
    <property type="entry name" value="rplN_bact"/>
    <property type="match status" value="1"/>
</dbReference>
<dbReference type="PANTHER" id="PTHR11761">
    <property type="entry name" value="50S/60S RIBOSOMAL PROTEIN L14/L23"/>
    <property type="match status" value="1"/>
</dbReference>
<dbReference type="PANTHER" id="PTHR11761:SF3">
    <property type="entry name" value="LARGE RIBOSOMAL SUBUNIT PROTEIN UL14M"/>
    <property type="match status" value="1"/>
</dbReference>
<dbReference type="Pfam" id="PF00238">
    <property type="entry name" value="Ribosomal_L14"/>
    <property type="match status" value="1"/>
</dbReference>
<dbReference type="SMART" id="SM01374">
    <property type="entry name" value="Ribosomal_L14"/>
    <property type="match status" value="1"/>
</dbReference>
<dbReference type="SUPFAM" id="SSF50193">
    <property type="entry name" value="Ribosomal protein L14"/>
    <property type="match status" value="1"/>
</dbReference>
<dbReference type="PROSITE" id="PS00049">
    <property type="entry name" value="RIBOSOMAL_L14"/>
    <property type="match status" value="1"/>
</dbReference>
<proteinExistence type="inferred from homology"/>
<gene>
    <name evidence="1" type="primary">rplN</name>
    <name type="ordered locus">Noca_3895</name>
</gene>
<keyword id="KW-1185">Reference proteome</keyword>
<keyword id="KW-0687">Ribonucleoprotein</keyword>
<keyword id="KW-0689">Ribosomal protein</keyword>
<keyword id="KW-0694">RNA-binding</keyword>
<keyword id="KW-0699">rRNA-binding</keyword>
<protein>
    <recommendedName>
        <fullName evidence="1">Large ribosomal subunit protein uL14</fullName>
    </recommendedName>
    <alternativeName>
        <fullName evidence="2">50S ribosomal protein L14</fullName>
    </alternativeName>
</protein>
<organism>
    <name type="scientific">Nocardioides sp. (strain ATCC BAA-499 / JS614)</name>
    <dbReference type="NCBI Taxonomy" id="196162"/>
    <lineage>
        <taxon>Bacteria</taxon>
        <taxon>Bacillati</taxon>
        <taxon>Actinomycetota</taxon>
        <taxon>Actinomycetes</taxon>
        <taxon>Propionibacteriales</taxon>
        <taxon>Nocardioidaceae</taxon>
        <taxon>Nocardioides</taxon>
    </lineage>
</organism>
<feature type="chain" id="PRO_1000055654" description="Large ribosomal subunit protein uL14">
    <location>
        <begin position="1"/>
        <end position="122"/>
    </location>
</feature>
<comment type="function">
    <text evidence="1">Binds to 23S rRNA. Forms part of two intersubunit bridges in the 70S ribosome.</text>
</comment>
<comment type="subunit">
    <text evidence="1">Part of the 50S ribosomal subunit. Forms a cluster with proteins L3 and L19. In the 70S ribosome, L14 and L19 interact and together make contacts with the 16S rRNA in bridges B5 and B8.</text>
</comment>
<comment type="similarity">
    <text evidence="1">Belongs to the universal ribosomal protein uL14 family.</text>
</comment>
<name>RL14_NOCSJ</name>
<sequence>MIQQESRLKVADNTGAKEILCIRVLGGSGRRYAGIGDVIVATVKDAIPGGNVKKGDVVKAVVVRTVKERRRPDGSYIRFDENAAVILKNDGEPRGTRIFGPVGRELREKKFMKIISLAPEVL</sequence>